<keyword id="KW-0054">Arabinose catabolism</keyword>
<keyword id="KW-0067">ATP-binding</keyword>
<keyword id="KW-0119">Carbohydrate metabolism</keyword>
<keyword id="KW-0418">Kinase</keyword>
<keyword id="KW-0547">Nucleotide-binding</keyword>
<keyword id="KW-0808">Transferase</keyword>
<accession>B5RGD4</accession>
<reference key="1">
    <citation type="journal article" date="2008" name="Genome Res.">
        <title>Comparative genome analysis of Salmonella enteritidis PT4 and Salmonella gallinarum 287/91 provides insights into evolutionary and host adaptation pathways.</title>
        <authorList>
            <person name="Thomson N.R."/>
            <person name="Clayton D.J."/>
            <person name="Windhorst D."/>
            <person name="Vernikos G."/>
            <person name="Davidson S."/>
            <person name="Churcher C."/>
            <person name="Quail M.A."/>
            <person name="Stevens M."/>
            <person name="Jones M.A."/>
            <person name="Watson M."/>
            <person name="Barron A."/>
            <person name="Layton A."/>
            <person name="Pickard D."/>
            <person name="Kingsley R.A."/>
            <person name="Bignell A."/>
            <person name="Clark L."/>
            <person name="Harris B."/>
            <person name="Ormond D."/>
            <person name="Abdellah Z."/>
            <person name="Brooks K."/>
            <person name="Cherevach I."/>
            <person name="Chillingworth T."/>
            <person name="Woodward J."/>
            <person name="Norberczak H."/>
            <person name="Lord A."/>
            <person name="Arrowsmith C."/>
            <person name="Jagels K."/>
            <person name="Moule S."/>
            <person name="Mungall K."/>
            <person name="Saunders M."/>
            <person name="Whitehead S."/>
            <person name="Chabalgoity J.A."/>
            <person name="Maskell D."/>
            <person name="Humphreys T."/>
            <person name="Roberts M."/>
            <person name="Barrow P.A."/>
            <person name="Dougan G."/>
            <person name="Parkhill J."/>
        </authorList>
    </citation>
    <scope>NUCLEOTIDE SEQUENCE [LARGE SCALE GENOMIC DNA]</scope>
    <source>
        <strain>287/91 / NCTC 13346</strain>
    </source>
</reference>
<protein>
    <recommendedName>
        <fullName evidence="1">Ribulokinase</fullName>
        <ecNumber evidence="1">2.7.1.16</ecNumber>
    </recommendedName>
</protein>
<sequence length="569" mass="61788">MAIAIGLDFGSDSVRALAVDCATGDEIATSVEWYPRWQEGRYCDGPNNQFRHHPRDYMESMEAALKAVLAQLSAAQRANVVGIGVDSTGSTPAPIDADGNVLALRPEFAENPNAMFVLWKDHTAVEEADEITRLCHKPGKVDYSRYIGGIYSSEWFWAKILHVTRQDSAVAQAAVSWIELCDWVPALLSGTTRPQDIRRGRCSAGHKTLWHESWGGLPPASFFDELDPCINRHLHYPLFSETFTADLPVGTLCAEWAQRLDLPESVVISGGAFDCHMGAVGAGAQSNTLVKVIGTSTCDILIADKQSVGDRAVKGICGQVDGSVVPNFIGLEAGQSAFGDIYAWFSRVLSWPLEQLAAQHPELKTQINASQKQLLPALTDAWAKNPSLDHLPVVLDWFNGRRTPNANQRLKGVITDLNLATDAPALFGGLVASTAFGARAIQECFTEQGIAVNNVMALGGIARKNQVIMQVCCDVLNRPLQIVASDQCCALGAAIFAAVAAKVHADIPAAQQSMASAVERTLRPRPEQAQRFERLYRRYQQWALSAEQHYLPTAAPAPTTPANQAILTH</sequence>
<proteinExistence type="inferred from homology"/>
<comment type="catalytic activity">
    <reaction evidence="1">
        <text>D-ribulose + ATP = D-ribulose 5-phosphate + ADP + H(+)</text>
        <dbReference type="Rhea" id="RHEA:17601"/>
        <dbReference type="ChEBI" id="CHEBI:15378"/>
        <dbReference type="ChEBI" id="CHEBI:17173"/>
        <dbReference type="ChEBI" id="CHEBI:30616"/>
        <dbReference type="ChEBI" id="CHEBI:58121"/>
        <dbReference type="ChEBI" id="CHEBI:456216"/>
        <dbReference type="EC" id="2.7.1.16"/>
    </reaction>
</comment>
<comment type="catalytic activity">
    <reaction evidence="1">
        <text>L-ribulose + ATP = L-ribulose 5-phosphate + ADP + H(+)</text>
        <dbReference type="Rhea" id="RHEA:22072"/>
        <dbReference type="ChEBI" id="CHEBI:15378"/>
        <dbReference type="ChEBI" id="CHEBI:16880"/>
        <dbReference type="ChEBI" id="CHEBI:30616"/>
        <dbReference type="ChEBI" id="CHEBI:58226"/>
        <dbReference type="ChEBI" id="CHEBI:456216"/>
        <dbReference type="EC" id="2.7.1.16"/>
    </reaction>
</comment>
<comment type="pathway">
    <text evidence="1">Carbohydrate degradation; L-arabinose degradation via L-ribulose; D-xylulose 5-phosphate from L-arabinose (bacterial route): step 2/3.</text>
</comment>
<comment type="similarity">
    <text evidence="1">Belongs to the ribulokinase family.</text>
</comment>
<evidence type="ECO:0000255" key="1">
    <source>
        <dbReference type="HAMAP-Rule" id="MF_00520"/>
    </source>
</evidence>
<name>ARAB_SALG2</name>
<organism>
    <name type="scientific">Salmonella gallinarum (strain 287/91 / NCTC 13346)</name>
    <dbReference type="NCBI Taxonomy" id="550538"/>
    <lineage>
        <taxon>Bacteria</taxon>
        <taxon>Pseudomonadati</taxon>
        <taxon>Pseudomonadota</taxon>
        <taxon>Gammaproteobacteria</taxon>
        <taxon>Enterobacterales</taxon>
        <taxon>Enterobacteriaceae</taxon>
        <taxon>Salmonella</taxon>
    </lineage>
</organism>
<dbReference type="EC" id="2.7.1.16" evidence="1"/>
<dbReference type="EMBL" id="AM933173">
    <property type="protein sequence ID" value="CAR36011.1"/>
    <property type="molecule type" value="Genomic_DNA"/>
</dbReference>
<dbReference type="RefSeq" id="WP_000951811.1">
    <property type="nucleotide sequence ID" value="NC_011274.1"/>
</dbReference>
<dbReference type="SMR" id="B5RGD4"/>
<dbReference type="KEGG" id="seg:SG0104"/>
<dbReference type="HOGENOM" id="CLU_009281_9_1_6"/>
<dbReference type="UniPathway" id="UPA00145">
    <property type="reaction ID" value="UER00566"/>
</dbReference>
<dbReference type="Proteomes" id="UP000008321">
    <property type="component" value="Chromosome"/>
</dbReference>
<dbReference type="GO" id="GO:0005737">
    <property type="term" value="C:cytoplasm"/>
    <property type="evidence" value="ECO:0007669"/>
    <property type="project" value="TreeGrafter"/>
</dbReference>
<dbReference type="GO" id="GO:0005524">
    <property type="term" value="F:ATP binding"/>
    <property type="evidence" value="ECO:0007669"/>
    <property type="project" value="UniProtKB-KW"/>
</dbReference>
<dbReference type="GO" id="GO:0019150">
    <property type="term" value="F:D-ribulokinase activity"/>
    <property type="evidence" value="ECO:0007669"/>
    <property type="project" value="TreeGrafter"/>
</dbReference>
<dbReference type="GO" id="GO:0008741">
    <property type="term" value="F:ribulokinase activity"/>
    <property type="evidence" value="ECO:0007669"/>
    <property type="project" value="UniProtKB-UniRule"/>
</dbReference>
<dbReference type="GO" id="GO:0019569">
    <property type="term" value="P:L-arabinose catabolic process to xylulose 5-phosphate"/>
    <property type="evidence" value="ECO:0007669"/>
    <property type="project" value="UniProtKB-UniRule"/>
</dbReference>
<dbReference type="CDD" id="cd07781">
    <property type="entry name" value="ASKHA_NBD_FGGY_L-RBK"/>
    <property type="match status" value="1"/>
</dbReference>
<dbReference type="Gene3D" id="1.20.58.2240">
    <property type="match status" value="1"/>
</dbReference>
<dbReference type="Gene3D" id="3.30.420.40">
    <property type="match status" value="1"/>
</dbReference>
<dbReference type="HAMAP" id="MF_00520">
    <property type="entry name" value="Ribulokinase"/>
    <property type="match status" value="1"/>
</dbReference>
<dbReference type="InterPro" id="IPR043129">
    <property type="entry name" value="ATPase_NBD"/>
</dbReference>
<dbReference type="InterPro" id="IPR018485">
    <property type="entry name" value="FGGY_C"/>
</dbReference>
<dbReference type="InterPro" id="IPR005929">
    <property type="entry name" value="Ribulokinase"/>
</dbReference>
<dbReference type="NCBIfam" id="TIGR01234">
    <property type="entry name" value="L-ribulokinase"/>
    <property type="match status" value="1"/>
</dbReference>
<dbReference type="NCBIfam" id="NF003154">
    <property type="entry name" value="PRK04123.1"/>
    <property type="match status" value="1"/>
</dbReference>
<dbReference type="PANTHER" id="PTHR43435:SF4">
    <property type="entry name" value="FGGY CARBOHYDRATE KINASE DOMAIN-CONTAINING PROTEIN"/>
    <property type="match status" value="1"/>
</dbReference>
<dbReference type="PANTHER" id="PTHR43435">
    <property type="entry name" value="RIBULOKINASE"/>
    <property type="match status" value="1"/>
</dbReference>
<dbReference type="Pfam" id="PF02782">
    <property type="entry name" value="FGGY_C"/>
    <property type="match status" value="1"/>
</dbReference>
<dbReference type="SUPFAM" id="SSF53067">
    <property type="entry name" value="Actin-like ATPase domain"/>
    <property type="match status" value="2"/>
</dbReference>
<feature type="chain" id="PRO_1000127639" description="Ribulokinase">
    <location>
        <begin position="1"/>
        <end position="569"/>
    </location>
</feature>
<gene>
    <name evidence="1" type="primary">araB</name>
    <name type="ordered locus">SG0104</name>
</gene>